<proteinExistence type="inferred from homology"/>
<reference key="1">
    <citation type="submission" date="2009-01" db="EMBL/GenBank/DDBJ databases">
        <title>Complete sequence of chromosome of Methylobacterium nodulans ORS 2060.</title>
        <authorList>
            <consortium name="US DOE Joint Genome Institute"/>
            <person name="Lucas S."/>
            <person name="Copeland A."/>
            <person name="Lapidus A."/>
            <person name="Glavina del Rio T."/>
            <person name="Dalin E."/>
            <person name="Tice H."/>
            <person name="Bruce D."/>
            <person name="Goodwin L."/>
            <person name="Pitluck S."/>
            <person name="Sims D."/>
            <person name="Brettin T."/>
            <person name="Detter J.C."/>
            <person name="Han C."/>
            <person name="Larimer F."/>
            <person name="Land M."/>
            <person name="Hauser L."/>
            <person name="Kyrpides N."/>
            <person name="Ivanova N."/>
            <person name="Marx C.J."/>
            <person name="Richardson P."/>
        </authorList>
    </citation>
    <scope>NUCLEOTIDE SEQUENCE [LARGE SCALE GENOMIC DNA]</scope>
    <source>
        <strain>LMG 21967 / CNCM I-2342 / ORS 2060</strain>
    </source>
</reference>
<dbReference type="EMBL" id="CP001349">
    <property type="protein sequence ID" value="ACL60748.1"/>
    <property type="molecule type" value="Genomic_DNA"/>
</dbReference>
<dbReference type="RefSeq" id="WP_012334986.1">
    <property type="nucleotide sequence ID" value="NC_011894.1"/>
</dbReference>
<dbReference type="SMR" id="B8ISU9"/>
<dbReference type="STRING" id="460265.Mnod_5920"/>
<dbReference type="KEGG" id="mno:Mnod_5920"/>
<dbReference type="eggNOG" id="COG0333">
    <property type="taxonomic scope" value="Bacteria"/>
</dbReference>
<dbReference type="HOGENOM" id="CLU_129084_2_2_5"/>
<dbReference type="OrthoDB" id="9801927at2"/>
<dbReference type="Proteomes" id="UP000008207">
    <property type="component" value="Chromosome"/>
</dbReference>
<dbReference type="GO" id="GO:0015934">
    <property type="term" value="C:large ribosomal subunit"/>
    <property type="evidence" value="ECO:0007669"/>
    <property type="project" value="InterPro"/>
</dbReference>
<dbReference type="GO" id="GO:0003735">
    <property type="term" value="F:structural constituent of ribosome"/>
    <property type="evidence" value="ECO:0007669"/>
    <property type="project" value="InterPro"/>
</dbReference>
<dbReference type="GO" id="GO:0006412">
    <property type="term" value="P:translation"/>
    <property type="evidence" value="ECO:0007669"/>
    <property type="project" value="UniProtKB-UniRule"/>
</dbReference>
<dbReference type="Gene3D" id="1.20.5.640">
    <property type="entry name" value="Single helix bin"/>
    <property type="match status" value="1"/>
</dbReference>
<dbReference type="HAMAP" id="MF_00340">
    <property type="entry name" value="Ribosomal_bL32"/>
    <property type="match status" value="1"/>
</dbReference>
<dbReference type="InterPro" id="IPR002677">
    <property type="entry name" value="Ribosomal_bL32"/>
</dbReference>
<dbReference type="InterPro" id="IPR044957">
    <property type="entry name" value="Ribosomal_bL32_bact"/>
</dbReference>
<dbReference type="InterPro" id="IPR011332">
    <property type="entry name" value="Ribosomal_zn-bd"/>
</dbReference>
<dbReference type="NCBIfam" id="TIGR01031">
    <property type="entry name" value="rpmF_bact"/>
    <property type="match status" value="1"/>
</dbReference>
<dbReference type="PANTHER" id="PTHR35534">
    <property type="entry name" value="50S RIBOSOMAL PROTEIN L32"/>
    <property type="match status" value="1"/>
</dbReference>
<dbReference type="PANTHER" id="PTHR35534:SF1">
    <property type="entry name" value="LARGE RIBOSOMAL SUBUNIT PROTEIN BL32"/>
    <property type="match status" value="1"/>
</dbReference>
<dbReference type="Pfam" id="PF01783">
    <property type="entry name" value="Ribosomal_L32p"/>
    <property type="match status" value="1"/>
</dbReference>
<dbReference type="SUPFAM" id="SSF57829">
    <property type="entry name" value="Zn-binding ribosomal proteins"/>
    <property type="match status" value="1"/>
</dbReference>
<name>RL32_METNO</name>
<protein>
    <recommendedName>
        <fullName evidence="1">Large ribosomal subunit protein bL32</fullName>
    </recommendedName>
    <alternativeName>
        <fullName evidence="3">50S ribosomal protein L32</fullName>
    </alternativeName>
</protein>
<comment type="similarity">
    <text evidence="1">Belongs to the bacterial ribosomal protein bL32 family.</text>
</comment>
<evidence type="ECO:0000255" key="1">
    <source>
        <dbReference type="HAMAP-Rule" id="MF_00340"/>
    </source>
</evidence>
<evidence type="ECO:0000256" key="2">
    <source>
        <dbReference type="SAM" id="MobiDB-lite"/>
    </source>
</evidence>
<evidence type="ECO:0000305" key="3"/>
<accession>B8ISU9</accession>
<feature type="chain" id="PRO_1000195983" description="Large ribosomal subunit protein bL32">
    <location>
        <begin position="1"/>
        <end position="61"/>
    </location>
</feature>
<feature type="region of interest" description="Disordered" evidence="2">
    <location>
        <begin position="1"/>
        <end position="44"/>
    </location>
</feature>
<feature type="compositionally biased region" description="Basic residues" evidence="2">
    <location>
        <begin position="1"/>
        <end position="16"/>
    </location>
</feature>
<feature type="compositionally biased region" description="Basic and acidic residues" evidence="2">
    <location>
        <begin position="28"/>
        <end position="44"/>
    </location>
</feature>
<keyword id="KW-1185">Reference proteome</keyword>
<keyword id="KW-0687">Ribonucleoprotein</keyword>
<keyword id="KW-0689">Ribosomal protein</keyword>
<sequence>MAVPKRKTSPSRRGMRRSADALKAPTYVEDKDSGELRRPHHIDLKTGMYRGRQVLKVKTEA</sequence>
<gene>
    <name evidence="1" type="primary">rpmF</name>
    <name type="ordered locus">Mnod_5920</name>
</gene>
<organism>
    <name type="scientific">Methylobacterium nodulans (strain LMG 21967 / CNCM I-2342 / ORS 2060)</name>
    <dbReference type="NCBI Taxonomy" id="460265"/>
    <lineage>
        <taxon>Bacteria</taxon>
        <taxon>Pseudomonadati</taxon>
        <taxon>Pseudomonadota</taxon>
        <taxon>Alphaproteobacteria</taxon>
        <taxon>Hyphomicrobiales</taxon>
        <taxon>Methylobacteriaceae</taxon>
        <taxon>Methylobacterium</taxon>
    </lineage>
</organism>